<organism>
    <name type="scientific">Arabidopsis thaliana</name>
    <name type="common">Mouse-ear cress</name>
    <dbReference type="NCBI Taxonomy" id="3702"/>
    <lineage>
        <taxon>Eukaryota</taxon>
        <taxon>Viridiplantae</taxon>
        <taxon>Streptophyta</taxon>
        <taxon>Embryophyta</taxon>
        <taxon>Tracheophyta</taxon>
        <taxon>Spermatophyta</taxon>
        <taxon>Magnoliopsida</taxon>
        <taxon>eudicotyledons</taxon>
        <taxon>Gunneridae</taxon>
        <taxon>Pentapetalae</taxon>
        <taxon>rosids</taxon>
        <taxon>malvids</taxon>
        <taxon>Brassicales</taxon>
        <taxon>Brassicaceae</taxon>
        <taxon>Camelineae</taxon>
        <taxon>Arabidopsis</taxon>
    </lineage>
</organism>
<name>SOP23_ARATH</name>
<protein>
    <recommendedName>
        <fullName evidence="4">Serine rich endogenous peptide 23</fullName>
        <shortName evidence="4">AtSCOOP23</shortName>
    </recommendedName>
    <alternativeName>
        <fullName evidence="4">Phytocytokine SCOOP23</fullName>
    </alternativeName>
    <alternativeName>
        <fullName evidence="4">Precursor of serine rich endogenous peptide phytocytokine 23</fullName>
    </alternativeName>
</protein>
<accession>Q1G3E7</accession>
<accession>A0MDW5</accession>
<gene>
    <name evidence="4" type="primary">PROSCOOP23</name>
    <name evidence="4" type="synonym">SCOOP23</name>
    <name evidence="7" type="ordered locus">At1g36622</name>
    <name evidence="8" type="ORF">T15P17</name>
</gene>
<sequence>MNKVVVYVLALSILLFFGLPNTTLARVQYGSPVSRKEIGKGVWDQKVFNEIKIAVGGSDSVRAHSKDHKSNPNG</sequence>
<evidence type="ECO:0000250" key="1">
    <source>
        <dbReference type="UniProtKB" id="B3H7I1"/>
    </source>
</evidence>
<evidence type="ECO:0000255" key="2"/>
<evidence type="ECO:0000269" key="3">
    <source>
    </source>
</evidence>
<evidence type="ECO:0000303" key="4">
    <source>
    </source>
</evidence>
<evidence type="ECO:0000305" key="5"/>
<evidence type="ECO:0000305" key="6">
    <source>
    </source>
</evidence>
<evidence type="ECO:0000312" key="7">
    <source>
        <dbReference type="Araport" id="AT1G36622"/>
    </source>
</evidence>
<evidence type="ECO:0000312" key="8">
    <source>
        <dbReference type="EMBL" id="AC025782"/>
    </source>
</evidence>
<dbReference type="EMBL" id="AC025782">
    <property type="status" value="NOT_ANNOTATED_CDS"/>
    <property type="molecule type" value="Genomic_DNA"/>
</dbReference>
<dbReference type="EMBL" id="CP002684">
    <property type="protein sequence ID" value="AEE31868.1"/>
    <property type="molecule type" value="Genomic_DNA"/>
</dbReference>
<dbReference type="EMBL" id="DQ487637">
    <property type="protein sequence ID" value="ABF59257.1"/>
    <property type="molecule type" value="mRNA"/>
</dbReference>
<dbReference type="EMBL" id="DQ652731">
    <property type="protein sequence ID" value="ABK28353.1"/>
    <property type="status" value="ALT_SEQ"/>
    <property type="molecule type" value="mRNA"/>
</dbReference>
<dbReference type="RefSeq" id="NP_001077669.1">
    <property type="nucleotide sequence ID" value="NM_001084200.3"/>
</dbReference>
<dbReference type="FunCoup" id="Q1G3E7">
    <property type="interactions" value="4"/>
</dbReference>
<dbReference type="STRING" id="3702.Q1G3E7"/>
<dbReference type="iPTMnet" id="Q1G3E7"/>
<dbReference type="PaxDb" id="3702-AT1G36622.1"/>
<dbReference type="EnsemblPlants" id="AT1G36622.1">
    <property type="protein sequence ID" value="AT1G36622.1"/>
    <property type="gene ID" value="AT1G36622"/>
</dbReference>
<dbReference type="GeneID" id="5007772"/>
<dbReference type="Gramene" id="AT1G36622.1">
    <property type="protein sequence ID" value="AT1G36622.1"/>
    <property type="gene ID" value="AT1G36622"/>
</dbReference>
<dbReference type="KEGG" id="ath:AT1G36622"/>
<dbReference type="Araport" id="AT1G36622"/>
<dbReference type="TAIR" id="AT1G36622"/>
<dbReference type="HOGENOM" id="CLU_199978_0_0_1"/>
<dbReference type="InParanoid" id="Q1G3E7"/>
<dbReference type="OMA" id="EIGKGVW"/>
<dbReference type="OrthoDB" id="1105735at2759"/>
<dbReference type="PRO" id="PR:Q1G3E7"/>
<dbReference type="Proteomes" id="UP000006548">
    <property type="component" value="Chromosome 1"/>
</dbReference>
<dbReference type="ExpressionAtlas" id="Q1G3E7">
    <property type="expression patterns" value="baseline and differential"/>
</dbReference>
<dbReference type="GO" id="GO:0048046">
    <property type="term" value="C:apoplast"/>
    <property type="evidence" value="ECO:0000250"/>
    <property type="project" value="UniProtKB"/>
</dbReference>
<dbReference type="GO" id="GO:0005886">
    <property type="term" value="C:plasma membrane"/>
    <property type="evidence" value="ECO:0007669"/>
    <property type="project" value="UniProtKB-SubCell"/>
</dbReference>
<dbReference type="GO" id="GO:0030275">
    <property type="term" value="F:LRR domain binding"/>
    <property type="evidence" value="ECO:0000250"/>
    <property type="project" value="UniProtKB"/>
</dbReference>
<dbReference type="GO" id="GO:0033612">
    <property type="term" value="F:receptor serine/threonine kinase binding"/>
    <property type="evidence" value="ECO:0000250"/>
    <property type="project" value="UniProtKB"/>
</dbReference>
<feature type="signal peptide" evidence="2">
    <location>
        <begin position="1"/>
        <end position="25"/>
    </location>
</feature>
<feature type="propeptide" id="PRO_0000457258" description="Removed in mature form" evidence="1">
    <location>
        <begin position="26"/>
        <end status="unknown"/>
    </location>
</feature>
<feature type="peptide" id="PRO_0000457259" description="Serine rich endogenous peptide 23" evidence="1">
    <location>
        <begin status="unknown"/>
        <end position="74"/>
    </location>
</feature>
<feature type="short sequence motif" description="SCOOP motif" evidence="6">
    <location>
        <begin position="52"/>
        <end position="66"/>
    </location>
</feature>
<feature type="short sequence motif" description="SxS motif essential for MIK2 binding" evidence="1">
    <location>
        <begin position="58"/>
        <end position="60"/>
    </location>
</feature>
<keyword id="KW-0052">Apoplast</keyword>
<keyword id="KW-1003">Cell membrane</keyword>
<keyword id="KW-0165">Cleavage on pair of basic residues</keyword>
<keyword id="KW-0472">Membrane</keyword>
<keyword id="KW-1185">Reference proteome</keyword>
<keyword id="KW-0964">Secreted</keyword>
<keyword id="KW-0732">Signal</keyword>
<proteinExistence type="evidence at transcript level"/>
<reference key="1">
    <citation type="journal article" date="2000" name="Nature">
        <title>Sequence and analysis of chromosome 1 of the plant Arabidopsis thaliana.</title>
        <authorList>
            <person name="Theologis A."/>
            <person name="Ecker J.R."/>
            <person name="Palm C.J."/>
            <person name="Federspiel N.A."/>
            <person name="Kaul S."/>
            <person name="White O."/>
            <person name="Alonso J."/>
            <person name="Altafi H."/>
            <person name="Araujo R."/>
            <person name="Bowman C.L."/>
            <person name="Brooks S.Y."/>
            <person name="Buehler E."/>
            <person name="Chan A."/>
            <person name="Chao Q."/>
            <person name="Chen H."/>
            <person name="Cheuk R.F."/>
            <person name="Chin C.W."/>
            <person name="Chung M.K."/>
            <person name="Conn L."/>
            <person name="Conway A.B."/>
            <person name="Conway A.R."/>
            <person name="Creasy T.H."/>
            <person name="Dewar K."/>
            <person name="Dunn P."/>
            <person name="Etgu P."/>
            <person name="Feldblyum T.V."/>
            <person name="Feng J.-D."/>
            <person name="Fong B."/>
            <person name="Fujii C.Y."/>
            <person name="Gill J.E."/>
            <person name="Goldsmith A.D."/>
            <person name="Haas B."/>
            <person name="Hansen N.F."/>
            <person name="Hughes B."/>
            <person name="Huizar L."/>
            <person name="Hunter J.L."/>
            <person name="Jenkins J."/>
            <person name="Johnson-Hopson C."/>
            <person name="Khan S."/>
            <person name="Khaykin E."/>
            <person name="Kim C.J."/>
            <person name="Koo H.L."/>
            <person name="Kremenetskaia I."/>
            <person name="Kurtz D.B."/>
            <person name="Kwan A."/>
            <person name="Lam B."/>
            <person name="Langin-Hooper S."/>
            <person name="Lee A."/>
            <person name="Lee J.M."/>
            <person name="Lenz C.A."/>
            <person name="Li J.H."/>
            <person name="Li Y.-P."/>
            <person name="Lin X."/>
            <person name="Liu S.X."/>
            <person name="Liu Z.A."/>
            <person name="Luros J.S."/>
            <person name="Maiti R."/>
            <person name="Marziali A."/>
            <person name="Militscher J."/>
            <person name="Miranda M."/>
            <person name="Nguyen M."/>
            <person name="Nierman W.C."/>
            <person name="Osborne B.I."/>
            <person name="Pai G."/>
            <person name="Peterson J."/>
            <person name="Pham P.K."/>
            <person name="Rizzo M."/>
            <person name="Rooney T."/>
            <person name="Rowley D."/>
            <person name="Sakano H."/>
            <person name="Salzberg S.L."/>
            <person name="Schwartz J.R."/>
            <person name="Shinn P."/>
            <person name="Southwick A.M."/>
            <person name="Sun H."/>
            <person name="Tallon L.J."/>
            <person name="Tambunga G."/>
            <person name="Toriumi M.J."/>
            <person name="Town C.D."/>
            <person name="Utterback T."/>
            <person name="Van Aken S."/>
            <person name="Vaysberg M."/>
            <person name="Vysotskaia V.S."/>
            <person name="Walker M."/>
            <person name="Wu D."/>
            <person name="Yu G."/>
            <person name="Fraser C.M."/>
            <person name="Venter J.C."/>
            <person name="Davis R.W."/>
        </authorList>
    </citation>
    <scope>NUCLEOTIDE SEQUENCE [LARGE SCALE GENOMIC DNA]</scope>
    <source>
        <strain>cv. Columbia</strain>
    </source>
</reference>
<reference key="2">
    <citation type="journal article" date="2017" name="Plant J.">
        <title>Araport11: a complete reannotation of the Arabidopsis thaliana reference genome.</title>
        <authorList>
            <person name="Cheng C.Y."/>
            <person name="Krishnakumar V."/>
            <person name="Chan A.P."/>
            <person name="Thibaud-Nissen F."/>
            <person name="Schobel S."/>
            <person name="Town C.D."/>
        </authorList>
    </citation>
    <scope>GENOME REANNOTATION</scope>
    <source>
        <strain>cv. Columbia</strain>
    </source>
</reference>
<reference key="3">
    <citation type="journal article" date="2006" name="Plant Biotechnol. J.">
        <title>Simultaneous high-throughput recombinational cloning of open reading frames in closed and open configurations.</title>
        <authorList>
            <person name="Underwood B.A."/>
            <person name="Vanderhaeghen R."/>
            <person name="Whitford R."/>
            <person name="Town C.D."/>
            <person name="Hilson P."/>
        </authorList>
    </citation>
    <scope>NUCLEOTIDE SEQUENCE [LARGE SCALE MRNA]</scope>
    <source>
        <strain>cv. Columbia</strain>
    </source>
</reference>
<reference key="4">
    <citation type="journal article" date="2019" name="J. Exp. Bot.">
        <title>The SCOOP12 peptide regulates defense response and root elongation in Arabidopsis thaliana.</title>
        <authorList>
            <person name="Gully K."/>
            <person name="Pelletier S."/>
            <person name="Guillou M.-C."/>
            <person name="Ferrand M."/>
            <person name="Aligon S."/>
            <person name="Pokotylo I."/>
            <person name="Perrin A."/>
            <person name="Vergne E."/>
            <person name="Fagard M."/>
            <person name="Ruelland E."/>
            <person name="Grappin P."/>
            <person name="Bucher E."/>
            <person name="Renou J.-P."/>
            <person name="Aubourg S."/>
        </authorList>
    </citation>
    <scope>GENE FAMILY</scope>
    <source>
        <strain>cv. Columbia</strain>
        <strain>cv. Wassilewskija</strain>
    </source>
</reference>
<reference key="5">
    <citation type="journal article" date="2021" name="Nat. Commun.">
        <title>The Arabidopsis MIK2 receptor elicits immunity by sensing a conserved signature from phytocytokines and microbes.</title>
        <authorList>
            <person name="Hou S."/>
            <person name="Liu D."/>
            <person name="Huang S."/>
            <person name="Luo D."/>
            <person name="Liu Z."/>
            <person name="Xiang Q."/>
            <person name="Wang P."/>
            <person name="Mu R."/>
            <person name="Han Z."/>
            <person name="Chen S."/>
            <person name="Chai J."/>
            <person name="Shan L."/>
            <person name="He P."/>
        </authorList>
    </citation>
    <scope>FUNCTION</scope>
    <scope>GENE FAMILY</scope>
    <scope>NOMENCLATURE</scope>
    <source>
        <strain>cv. Columbia</strain>
    </source>
</reference>
<comment type="function">
    <text evidence="3">Brassicaceae-specific phytocytokine (plant endogenous peptide released into the apoplast) perceived by MIK2 in a BAK1/SERK3 and SERK4 coreceptors-dependent manner, that modulates various physiological and antimicrobial processes including growth prevention and reactive oxygen species (ROS) response regulation (PubMed:34535661). Inhibits root growth (PubMed:34535661).</text>
</comment>
<comment type="subunit">
    <text evidence="1">Interacts with MIK2 (via extracellular leucine-rich repeat domain); this interaction triggers the formation of complex between MIK2 and the BAK1/SERK3 and SERK4 coreceptors, and subsequent BAK1 activation by phosphorylation.</text>
</comment>
<comment type="subcellular location">
    <subcellularLocation>
        <location evidence="1">Cell membrane</location>
    </subcellularLocation>
    <subcellularLocation>
        <location evidence="1">Secreted</location>
        <location evidence="1">Extracellular space</location>
        <location evidence="1">Apoplast</location>
    </subcellularLocation>
    <text evidence="1">The precursor of SCOOP23, PROSCOOP23, accumulates at the plasma membrane and is proteolytically cleaved to release the SCOOP23 in the apoplasm.</text>
</comment>
<comment type="tissue specificity">
    <text evidence="3">Mostly expressed in roots, and, to a lower extent, in seedlings shoots.</text>
</comment>
<comment type="similarity">
    <text evidence="5">Belongs to the serine rich endogenous peptide (SCOOP) phytocytokine family.</text>
</comment>
<comment type="sequence caution" evidence="5">
    <conflict type="erroneous termination">
        <sequence resource="EMBL-CDS" id="ABK28353"/>
    </conflict>
    <text>Extended C-terminus.</text>
</comment>